<evidence type="ECO:0000269" key="1">
    <source>
    </source>
</evidence>
<evidence type="ECO:0007744" key="2">
    <source>
    </source>
</evidence>
<keyword id="KW-0597">Phosphoprotein</keyword>
<keyword id="KW-1185">Reference proteome</keyword>
<dbReference type="EMBL" id="Z54141">
    <property type="protein sequence ID" value="CAA90833.1"/>
    <property type="molecule type" value="Genomic_DNA"/>
</dbReference>
<dbReference type="EMBL" id="AY557991">
    <property type="protein sequence ID" value="AAS56317.1"/>
    <property type="molecule type" value="Genomic_DNA"/>
</dbReference>
<dbReference type="EMBL" id="BK006946">
    <property type="protein sequence ID" value="DAA10216.1"/>
    <property type="molecule type" value="Genomic_DNA"/>
</dbReference>
<dbReference type="PIR" id="S59308">
    <property type="entry name" value="S59308"/>
</dbReference>
<dbReference type="RefSeq" id="NP_014046.1">
    <property type="nucleotide sequence ID" value="NM_001182826.1"/>
</dbReference>
<dbReference type="SMR" id="Q04869"/>
<dbReference type="BioGRID" id="35495">
    <property type="interactions" value="115"/>
</dbReference>
<dbReference type="DIP" id="DIP-3844N"/>
<dbReference type="FunCoup" id="Q04869">
    <property type="interactions" value="354"/>
</dbReference>
<dbReference type="IntAct" id="Q04869">
    <property type="interactions" value="14"/>
</dbReference>
<dbReference type="MINT" id="Q04869"/>
<dbReference type="STRING" id="4932.YMR315W"/>
<dbReference type="iPTMnet" id="Q04869"/>
<dbReference type="PaxDb" id="4932-YMR315W"/>
<dbReference type="PeptideAtlas" id="Q04869"/>
<dbReference type="TopDownProteomics" id="Q04869"/>
<dbReference type="EnsemblFungi" id="YMR315W_mRNA">
    <property type="protein sequence ID" value="YMR315W"/>
    <property type="gene ID" value="YMR315W"/>
</dbReference>
<dbReference type="GeneID" id="855363"/>
<dbReference type="KEGG" id="sce:YMR315W"/>
<dbReference type="AGR" id="SGD:S000004932"/>
<dbReference type="SGD" id="S000004932">
    <property type="gene designation" value="YMR315W"/>
</dbReference>
<dbReference type="VEuPathDB" id="FungiDB:YMR315W"/>
<dbReference type="eggNOG" id="KOG2742">
    <property type="taxonomic scope" value="Eukaryota"/>
</dbReference>
<dbReference type="HOGENOM" id="CLU_023194_3_1_1"/>
<dbReference type="InParanoid" id="Q04869"/>
<dbReference type="OMA" id="IWVGMDE"/>
<dbReference type="OrthoDB" id="64915at2759"/>
<dbReference type="BioCyc" id="YEAST:G3O-32979-MONOMER"/>
<dbReference type="BioGRID-ORCS" id="855363">
    <property type="hits" value="0 hits in 10 CRISPR screens"/>
</dbReference>
<dbReference type="PRO" id="PR:Q04869"/>
<dbReference type="Proteomes" id="UP000002311">
    <property type="component" value="Chromosome XIII"/>
</dbReference>
<dbReference type="RNAct" id="Q04869">
    <property type="molecule type" value="protein"/>
</dbReference>
<dbReference type="GO" id="GO:0005737">
    <property type="term" value="C:cytoplasm"/>
    <property type="evidence" value="ECO:0007005"/>
    <property type="project" value="SGD"/>
</dbReference>
<dbReference type="GO" id="GO:0005634">
    <property type="term" value="C:nucleus"/>
    <property type="evidence" value="ECO:0007005"/>
    <property type="project" value="SGD"/>
</dbReference>
<dbReference type="GO" id="GO:0000166">
    <property type="term" value="F:nucleotide binding"/>
    <property type="evidence" value="ECO:0007669"/>
    <property type="project" value="InterPro"/>
</dbReference>
<dbReference type="GO" id="GO:0016491">
    <property type="term" value="F:oxidoreductase activity"/>
    <property type="evidence" value="ECO:0000318"/>
    <property type="project" value="GO_Central"/>
</dbReference>
<dbReference type="GO" id="GO:0016651">
    <property type="term" value="F:oxidoreductase activity, acting on NAD(P)H"/>
    <property type="evidence" value="ECO:0000314"/>
    <property type="project" value="SGD"/>
</dbReference>
<dbReference type="GO" id="GO:0006740">
    <property type="term" value="P:NADPH regeneration"/>
    <property type="evidence" value="ECO:0000316"/>
    <property type="project" value="SGD"/>
</dbReference>
<dbReference type="FunFam" id="3.30.360.10:FF:000036">
    <property type="entry name" value="YMR315W-like protein"/>
    <property type="match status" value="1"/>
</dbReference>
<dbReference type="FunFam" id="3.40.50.720:FF:000544">
    <property type="entry name" value="YMR315W-like protein"/>
    <property type="match status" value="1"/>
</dbReference>
<dbReference type="Gene3D" id="3.30.360.10">
    <property type="entry name" value="Dihydrodipicolinate Reductase, domain 2"/>
    <property type="match status" value="1"/>
</dbReference>
<dbReference type="Gene3D" id="3.40.50.720">
    <property type="entry name" value="NAD(P)-binding Rossmann-like Domain"/>
    <property type="match status" value="1"/>
</dbReference>
<dbReference type="InterPro" id="IPR004104">
    <property type="entry name" value="Gfo/Idh/MocA-like_OxRdtase_C"/>
</dbReference>
<dbReference type="InterPro" id="IPR000683">
    <property type="entry name" value="Gfo/Idh/MocA-like_OxRdtase_N"/>
</dbReference>
<dbReference type="InterPro" id="IPR036291">
    <property type="entry name" value="NAD(P)-bd_dom_sf"/>
</dbReference>
<dbReference type="PANTHER" id="PTHR42840:SF5">
    <property type="entry name" value="NAD(P)-BINDING ROSSMANN-FOLD SUPERFAMILY PROTEIN"/>
    <property type="match status" value="1"/>
</dbReference>
<dbReference type="PANTHER" id="PTHR42840">
    <property type="entry name" value="NAD(P)-BINDING ROSSMANN-FOLD SUPERFAMILY PROTEIN-RELATED"/>
    <property type="match status" value="1"/>
</dbReference>
<dbReference type="Pfam" id="PF01408">
    <property type="entry name" value="GFO_IDH_MocA"/>
    <property type="match status" value="1"/>
</dbReference>
<dbReference type="Pfam" id="PF02894">
    <property type="entry name" value="GFO_IDH_MocA_C"/>
    <property type="match status" value="1"/>
</dbReference>
<dbReference type="SUPFAM" id="SSF55347">
    <property type="entry name" value="Glyceraldehyde-3-phosphate dehydrogenase-like, C-terminal domain"/>
    <property type="match status" value="1"/>
</dbReference>
<dbReference type="SUPFAM" id="SSF51735">
    <property type="entry name" value="NAD(P)-binding Rossmann-fold domains"/>
    <property type="match status" value="1"/>
</dbReference>
<comment type="miscellaneous">
    <text evidence="1">Present with 9600 molecules/cell in log phase SD medium.</text>
</comment>
<name>YM94_YEAST</name>
<sequence length="349" mass="38216">MSPLNVGIVGTGIFARDRHLPSYQEFPDKFKVIAAFNRHKAKALDFAKVADIPENKVYDNLDEILNDPHVDYIDALLPAQFNADIVEKAVKAGKPVILEKPIAANLDQAKEIVKIAESTPLPVGVAENWLYLPCIKIAKEQIEKIGPVVAFTHNSTGPFVTQNKYLTTTWRQKPEHIGGFLSDGGVHQLALVISLLGEFGSVSALTRQVRERSGADDIVFATVQLKNKEVIGSFTYGSAFGATEKSVFLKVYGKNGTVTVDLSDKKDPVVKVKLGGSAEDNGDEQIFKVDNDESFGVNAEFLNFHEAVSKKDKSLYLGTPRTAFHHLACVDAFLKSSAKNGDYVKIEQP</sequence>
<gene>
    <name type="ordered locus">YMR315W</name>
    <name type="ORF">YM9924.07</name>
</gene>
<accession>Q04869</accession>
<accession>D6W0E2</accession>
<proteinExistence type="evidence at protein level"/>
<protein>
    <recommendedName>
        <fullName>Uncharacterized protein YMR315W</fullName>
    </recommendedName>
</protein>
<organism>
    <name type="scientific">Saccharomyces cerevisiae (strain ATCC 204508 / S288c)</name>
    <name type="common">Baker's yeast</name>
    <dbReference type="NCBI Taxonomy" id="559292"/>
    <lineage>
        <taxon>Eukaryota</taxon>
        <taxon>Fungi</taxon>
        <taxon>Dikarya</taxon>
        <taxon>Ascomycota</taxon>
        <taxon>Saccharomycotina</taxon>
        <taxon>Saccharomycetes</taxon>
        <taxon>Saccharomycetales</taxon>
        <taxon>Saccharomycetaceae</taxon>
        <taxon>Saccharomyces</taxon>
    </lineage>
</organism>
<reference key="1">
    <citation type="journal article" date="1997" name="Nature">
        <title>The nucleotide sequence of Saccharomyces cerevisiae chromosome XIII.</title>
        <authorList>
            <person name="Bowman S."/>
            <person name="Churcher C.M."/>
            <person name="Badcock K."/>
            <person name="Brown D."/>
            <person name="Chillingworth T."/>
            <person name="Connor R."/>
            <person name="Dedman K."/>
            <person name="Devlin K."/>
            <person name="Gentles S."/>
            <person name="Hamlin N."/>
            <person name="Hunt S."/>
            <person name="Jagels K."/>
            <person name="Lye G."/>
            <person name="Moule S."/>
            <person name="Odell C."/>
            <person name="Pearson D."/>
            <person name="Rajandream M.A."/>
            <person name="Rice P."/>
            <person name="Skelton J."/>
            <person name="Walsh S.V."/>
            <person name="Whitehead S."/>
            <person name="Barrell B.G."/>
        </authorList>
    </citation>
    <scope>NUCLEOTIDE SEQUENCE [LARGE SCALE GENOMIC DNA]</scope>
    <source>
        <strain>ATCC 204508 / S288c</strain>
    </source>
</reference>
<reference key="2">
    <citation type="journal article" date="2014" name="G3 (Bethesda)">
        <title>The reference genome sequence of Saccharomyces cerevisiae: Then and now.</title>
        <authorList>
            <person name="Engel S.R."/>
            <person name="Dietrich F.S."/>
            <person name="Fisk D.G."/>
            <person name="Binkley G."/>
            <person name="Balakrishnan R."/>
            <person name="Costanzo M.C."/>
            <person name="Dwight S.S."/>
            <person name="Hitz B.C."/>
            <person name="Karra K."/>
            <person name="Nash R.S."/>
            <person name="Weng S."/>
            <person name="Wong E.D."/>
            <person name="Lloyd P."/>
            <person name="Skrzypek M.S."/>
            <person name="Miyasato S.R."/>
            <person name="Simison M."/>
            <person name="Cherry J.M."/>
        </authorList>
    </citation>
    <scope>GENOME REANNOTATION</scope>
    <source>
        <strain>ATCC 204508 / S288c</strain>
    </source>
</reference>
<reference key="3">
    <citation type="journal article" date="2007" name="Genome Res.">
        <title>Approaching a complete repository of sequence-verified protein-encoding clones for Saccharomyces cerevisiae.</title>
        <authorList>
            <person name="Hu Y."/>
            <person name="Rolfs A."/>
            <person name="Bhullar B."/>
            <person name="Murthy T.V.S."/>
            <person name="Zhu C."/>
            <person name="Berger M.F."/>
            <person name="Camargo A.A."/>
            <person name="Kelley F."/>
            <person name="McCarron S."/>
            <person name="Jepson D."/>
            <person name="Richardson A."/>
            <person name="Raphael J."/>
            <person name="Moreira D."/>
            <person name="Taycher E."/>
            <person name="Zuo D."/>
            <person name="Mohr S."/>
            <person name="Kane M.F."/>
            <person name="Williamson J."/>
            <person name="Simpson A.J.G."/>
            <person name="Bulyk M.L."/>
            <person name="Harlow E."/>
            <person name="Marsischky G."/>
            <person name="Kolodner R.D."/>
            <person name="LaBaer J."/>
        </authorList>
    </citation>
    <scope>NUCLEOTIDE SEQUENCE [GENOMIC DNA]</scope>
    <source>
        <strain>ATCC 204508 / S288c</strain>
    </source>
</reference>
<reference key="4">
    <citation type="journal article" date="2003" name="Nature">
        <title>Global analysis of protein expression in yeast.</title>
        <authorList>
            <person name="Ghaemmaghami S."/>
            <person name="Huh W.-K."/>
            <person name="Bower K."/>
            <person name="Howson R.W."/>
            <person name="Belle A."/>
            <person name="Dephoure N."/>
            <person name="O'Shea E.K."/>
            <person name="Weissman J.S."/>
        </authorList>
    </citation>
    <scope>LEVEL OF PROTEIN EXPRESSION [LARGE SCALE ANALYSIS]</scope>
</reference>
<reference key="5">
    <citation type="journal article" date="2008" name="Mol. Cell. Proteomics">
        <title>A multidimensional chromatography technology for in-depth phosphoproteome analysis.</title>
        <authorList>
            <person name="Albuquerque C.P."/>
            <person name="Smolka M.B."/>
            <person name="Payne S.H."/>
            <person name="Bafna V."/>
            <person name="Eng J."/>
            <person name="Zhou H."/>
        </authorList>
    </citation>
    <scope>PHOSPHORYLATION [LARGE SCALE ANALYSIS] AT SER-2</scope>
    <scope>IDENTIFICATION BY MASS SPECTROMETRY [LARGE SCALE ANALYSIS]</scope>
</reference>
<reference key="6">
    <citation type="journal article" date="2012" name="Proc. Natl. Acad. Sci. U.S.A.">
        <title>N-terminal acetylome analyses and functional insights of the N-terminal acetyltransferase NatB.</title>
        <authorList>
            <person name="Van Damme P."/>
            <person name="Lasa M."/>
            <person name="Polevoda B."/>
            <person name="Gazquez C."/>
            <person name="Elosegui-Artola A."/>
            <person name="Kim D.S."/>
            <person name="De Juan-Pardo E."/>
            <person name="Demeyer K."/>
            <person name="Hole K."/>
            <person name="Larrea E."/>
            <person name="Timmerman E."/>
            <person name="Prieto J."/>
            <person name="Arnesen T."/>
            <person name="Sherman F."/>
            <person name="Gevaert K."/>
            <person name="Aldabe R."/>
        </authorList>
    </citation>
    <scope>IDENTIFICATION BY MASS SPECTROMETRY [LARGE SCALE ANALYSIS]</scope>
</reference>
<feature type="chain" id="PRO_0000203357" description="Uncharacterized protein YMR315W">
    <location>
        <begin position="1"/>
        <end position="349"/>
    </location>
</feature>
<feature type="modified residue" description="Phosphoserine" evidence="2">
    <location>
        <position position="2"/>
    </location>
</feature>